<gene>
    <name evidence="1" type="primary">htpG</name>
    <name type="ordered locus">XOO2374</name>
</gene>
<evidence type="ECO:0000255" key="1">
    <source>
        <dbReference type="HAMAP-Rule" id="MF_00505"/>
    </source>
</evidence>
<organism>
    <name type="scientific">Xanthomonas oryzae pv. oryzae (strain MAFF 311018)</name>
    <dbReference type="NCBI Taxonomy" id="342109"/>
    <lineage>
        <taxon>Bacteria</taxon>
        <taxon>Pseudomonadati</taxon>
        <taxon>Pseudomonadota</taxon>
        <taxon>Gammaproteobacteria</taxon>
        <taxon>Lysobacterales</taxon>
        <taxon>Lysobacteraceae</taxon>
        <taxon>Xanthomonas</taxon>
    </lineage>
</organism>
<accession>Q2P2U8</accession>
<keyword id="KW-0067">ATP-binding</keyword>
<keyword id="KW-0143">Chaperone</keyword>
<keyword id="KW-0963">Cytoplasm</keyword>
<keyword id="KW-0547">Nucleotide-binding</keyword>
<keyword id="KW-0346">Stress response</keyword>
<feature type="chain" id="PRO_0000237006" description="Chaperone protein HtpG">
    <location>
        <begin position="1"/>
        <end position="634"/>
    </location>
</feature>
<feature type="region of interest" description="A; substrate-binding" evidence="1">
    <location>
        <begin position="1"/>
        <end position="342"/>
    </location>
</feature>
<feature type="region of interest" description="B" evidence="1">
    <location>
        <begin position="343"/>
        <end position="559"/>
    </location>
</feature>
<feature type="region of interest" description="C" evidence="1">
    <location>
        <begin position="560"/>
        <end position="634"/>
    </location>
</feature>
<protein>
    <recommendedName>
        <fullName evidence="1">Chaperone protein HtpG</fullName>
    </recommendedName>
    <alternativeName>
        <fullName evidence="1">Heat shock protein HtpG</fullName>
    </alternativeName>
    <alternativeName>
        <fullName evidence="1">High temperature protein G</fullName>
    </alternativeName>
</protein>
<sequence length="634" mass="70889">MTVDTDKQTLGFQTEVKQLLQLMIHSLYSNKEIFLRELVSNAADAADKLRFEALVKPELLEGSGELRIRVDYDKDARTVTIDDNGIGMSREDAVSHLGTIAKSGTADFLKHLSGDQKKDANLIGQFGVGFYSAFIVADQVDVYSRRAGLPAREGVHWSSRGEGEFEVASVDKPERGTRIVLHLKDGEDTFADGWTLRGILKKYSDHIGLPIEMRKEHYGEAADKPAEPEWEAVNRASALWTRPKSEIKDEEYQEFYKHIAHDAGNPLAWSHNKVEGKLEYTSLLFVPGRAPFDLYHRDSAKGLKLYVQRVFIMDQAEQFLPLYLRFIKGVVDSSDLSLNVSREILQSGPVVDSMKSALTKRSLDMLEKLAKDKPDDYATFWRNFGQALKEGPAEDYANREKIAGLMRFSSTHDTTGAQSVGLADYVSRLAEGQDKLYYLTGESYAQIKDSPHLEVFRKKGIEVLLLTDRIDEWLMSYLTEFDGKSFVDVARGDLDLGKLDSEEDKKAQEEVAKSKEGLASRIKAALGEDVAEVRVSHRLTDSPAILAIGQGDLGLQMRQLLEASGQAVPESKPVFEFNPTHPLIEKLDAEQDMDRFCDLSQVLFDQAALAAGDSLKDPAGYVKRLNKLLLELSV</sequence>
<comment type="function">
    <text evidence="1">Molecular chaperone. Has ATPase activity.</text>
</comment>
<comment type="subunit">
    <text evidence="1">Homodimer.</text>
</comment>
<comment type="subcellular location">
    <subcellularLocation>
        <location evidence="1">Cytoplasm</location>
    </subcellularLocation>
</comment>
<comment type="similarity">
    <text evidence="1">Belongs to the heat shock protein 90 family.</text>
</comment>
<name>HTPG_XANOM</name>
<reference key="1">
    <citation type="journal article" date="2005" name="Jpn. Agric. Res. Q.">
        <title>Genome sequence of Xanthomonas oryzae pv. oryzae suggests contribution of large numbers of effector genes and insertion sequences to its race diversity.</title>
        <authorList>
            <person name="Ochiai H."/>
            <person name="Inoue Y."/>
            <person name="Takeya M."/>
            <person name="Sasaki A."/>
            <person name="Kaku H."/>
        </authorList>
    </citation>
    <scope>NUCLEOTIDE SEQUENCE [LARGE SCALE GENOMIC DNA]</scope>
    <source>
        <strain>MAFF 311018</strain>
    </source>
</reference>
<proteinExistence type="inferred from homology"/>
<dbReference type="EMBL" id="AP008229">
    <property type="protein sequence ID" value="BAE69129.1"/>
    <property type="molecule type" value="Genomic_DNA"/>
</dbReference>
<dbReference type="RefSeq" id="WP_011408651.1">
    <property type="nucleotide sequence ID" value="NC_007705.1"/>
</dbReference>
<dbReference type="SMR" id="Q2P2U8"/>
<dbReference type="KEGG" id="xom:XOO2374"/>
<dbReference type="HOGENOM" id="CLU_006684_3_0_6"/>
<dbReference type="GO" id="GO:0005737">
    <property type="term" value="C:cytoplasm"/>
    <property type="evidence" value="ECO:0007669"/>
    <property type="project" value="UniProtKB-SubCell"/>
</dbReference>
<dbReference type="GO" id="GO:0005524">
    <property type="term" value="F:ATP binding"/>
    <property type="evidence" value="ECO:0007669"/>
    <property type="project" value="UniProtKB-UniRule"/>
</dbReference>
<dbReference type="GO" id="GO:0016887">
    <property type="term" value="F:ATP hydrolysis activity"/>
    <property type="evidence" value="ECO:0007669"/>
    <property type="project" value="InterPro"/>
</dbReference>
<dbReference type="GO" id="GO:0140662">
    <property type="term" value="F:ATP-dependent protein folding chaperone"/>
    <property type="evidence" value="ECO:0007669"/>
    <property type="project" value="InterPro"/>
</dbReference>
<dbReference type="GO" id="GO:0051082">
    <property type="term" value="F:unfolded protein binding"/>
    <property type="evidence" value="ECO:0007669"/>
    <property type="project" value="UniProtKB-UniRule"/>
</dbReference>
<dbReference type="CDD" id="cd16927">
    <property type="entry name" value="HATPase_Hsp90-like"/>
    <property type="match status" value="1"/>
</dbReference>
<dbReference type="FunFam" id="1.20.120.790:FF:000008">
    <property type="entry name" value="Chaperone protein HtpG"/>
    <property type="match status" value="1"/>
</dbReference>
<dbReference type="FunFam" id="3.30.230.80:FF:000002">
    <property type="entry name" value="Molecular chaperone HtpG"/>
    <property type="match status" value="1"/>
</dbReference>
<dbReference type="FunFam" id="3.30.565.10:FF:000009">
    <property type="entry name" value="Molecular chaperone HtpG"/>
    <property type="match status" value="1"/>
</dbReference>
<dbReference type="Gene3D" id="3.30.230.80">
    <property type="match status" value="1"/>
</dbReference>
<dbReference type="Gene3D" id="3.40.50.11260">
    <property type="match status" value="1"/>
</dbReference>
<dbReference type="Gene3D" id="1.20.120.790">
    <property type="entry name" value="Heat shock protein 90, C-terminal domain"/>
    <property type="match status" value="1"/>
</dbReference>
<dbReference type="Gene3D" id="3.30.565.10">
    <property type="entry name" value="Histidine kinase-like ATPase, C-terminal domain"/>
    <property type="match status" value="1"/>
</dbReference>
<dbReference type="HAMAP" id="MF_00505">
    <property type="entry name" value="HSP90"/>
    <property type="match status" value="1"/>
</dbReference>
<dbReference type="InterPro" id="IPR036890">
    <property type="entry name" value="HATPase_C_sf"/>
</dbReference>
<dbReference type="InterPro" id="IPR019805">
    <property type="entry name" value="Heat_shock_protein_90_CS"/>
</dbReference>
<dbReference type="InterPro" id="IPR037196">
    <property type="entry name" value="HSP90_C"/>
</dbReference>
<dbReference type="InterPro" id="IPR001404">
    <property type="entry name" value="Hsp90_fam"/>
</dbReference>
<dbReference type="InterPro" id="IPR020575">
    <property type="entry name" value="Hsp90_N"/>
</dbReference>
<dbReference type="InterPro" id="IPR020568">
    <property type="entry name" value="Ribosomal_Su5_D2-typ_SF"/>
</dbReference>
<dbReference type="NCBIfam" id="NF003555">
    <property type="entry name" value="PRK05218.1"/>
    <property type="match status" value="1"/>
</dbReference>
<dbReference type="PANTHER" id="PTHR11528">
    <property type="entry name" value="HEAT SHOCK PROTEIN 90 FAMILY MEMBER"/>
    <property type="match status" value="1"/>
</dbReference>
<dbReference type="Pfam" id="PF13589">
    <property type="entry name" value="HATPase_c_3"/>
    <property type="match status" value="1"/>
</dbReference>
<dbReference type="Pfam" id="PF00183">
    <property type="entry name" value="HSP90"/>
    <property type="match status" value="1"/>
</dbReference>
<dbReference type="PIRSF" id="PIRSF002583">
    <property type="entry name" value="Hsp90"/>
    <property type="match status" value="1"/>
</dbReference>
<dbReference type="PRINTS" id="PR00775">
    <property type="entry name" value="HEATSHOCK90"/>
</dbReference>
<dbReference type="SMART" id="SM00387">
    <property type="entry name" value="HATPase_c"/>
    <property type="match status" value="1"/>
</dbReference>
<dbReference type="SUPFAM" id="SSF55874">
    <property type="entry name" value="ATPase domain of HSP90 chaperone/DNA topoisomerase II/histidine kinase"/>
    <property type="match status" value="1"/>
</dbReference>
<dbReference type="SUPFAM" id="SSF110942">
    <property type="entry name" value="HSP90 C-terminal domain"/>
    <property type="match status" value="1"/>
</dbReference>
<dbReference type="SUPFAM" id="SSF54211">
    <property type="entry name" value="Ribosomal protein S5 domain 2-like"/>
    <property type="match status" value="1"/>
</dbReference>
<dbReference type="PROSITE" id="PS00298">
    <property type="entry name" value="HSP90"/>
    <property type="match status" value="1"/>
</dbReference>